<sequence>MSRSIRNQDVPELPRRRQVRTVGMSGNYWYVVEIDGRLKPRQVKRVRFWGQDIALFRDAAGELHAVEDRCPHRQLPLSQGFVEGGNLVCTYHGWKFDGCGRCTEIHHELGKGRTRLPRIRIRTYPVKAQWGLIWLFPGDPALADGTPLPTIPQLEGGRPWPFFPIDVTIKAHFSMIVENVCDFNHEYLHRHKRPFLQPILREWKQDADSVRVYYDTRFDGSPVAKLFMEGGARDLNEIEIWYQYPYQGSDIGGKYIHWLFMLPEDERTTRCFFVFLFGPIHVPIVNWKMPEFLRKPILWFTNKWYIEPLLGEDKWALELEQDGFERHPDAPQIELNPAISSFQRLSLEKWKAYQQSMERAGPKPAADPA</sequence>
<reference key="1">
    <citation type="journal article" date="2004" name="PLoS Biol.">
        <title>Genomic insights into methanotrophy: the complete genome sequence of Methylococcus capsulatus (Bath).</title>
        <authorList>
            <person name="Ward N.L."/>
            <person name="Larsen O."/>
            <person name="Sakwa J."/>
            <person name="Bruseth L."/>
            <person name="Khouri H.M."/>
            <person name="Durkin A.S."/>
            <person name="Dimitrov G."/>
            <person name="Jiang L."/>
            <person name="Scanlan D."/>
            <person name="Kang K.H."/>
            <person name="Lewis M.R."/>
            <person name="Nelson K.E."/>
            <person name="Methe B.A."/>
            <person name="Wu M."/>
            <person name="Heidelberg J.F."/>
            <person name="Paulsen I.T."/>
            <person name="Fouts D.E."/>
            <person name="Ravel J."/>
            <person name="Tettelin H."/>
            <person name="Ren Q."/>
            <person name="Read T.D."/>
            <person name="DeBoy R.T."/>
            <person name="Seshadri R."/>
            <person name="Salzberg S.L."/>
            <person name="Jensen H.B."/>
            <person name="Birkeland N.K."/>
            <person name="Nelson W.C."/>
            <person name="Dodson R.J."/>
            <person name="Grindhaug S.H."/>
            <person name="Holt I.E."/>
            <person name="Eidhammer I."/>
            <person name="Jonasen I."/>
            <person name="Vanaken S."/>
            <person name="Utterback T.R."/>
            <person name="Feldblyum T.V."/>
            <person name="Fraser C.M."/>
            <person name="Lillehaug J.R."/>
            <person name="Eisen J.A."/>
        </authorList>
    </citation>
    <scope>NUCLEOTIDE SEQUENCE [LARGE SCALE GENOMIC DNA]</scope>
    <source>
        <strain>ATCC 33009 / NCIMB 11132 / Bath</strain>
    </source>
</reference>
<reference key="2">
    <citation type="journal article" date="2018" name="Proc. Natl. Acad. Sci. U.S.A.">
        <title>C-4 sterol demethylation enzymes distinguish bacterial and eukaryotic sterol synthesis.</title>
        <authorList>
            <person name="Lee A.K."/>
            <person name="Banta A.B."/>
            <person name="Wei J.H."/>
            <person name="Kiemle D.J."/>
            <person name="Feng J."/>
            <person name="Giner J.L."/>
            <person name="Welander P.V."/>
        </authorList>
    </citation>
    <scope>FUNCTION</scope>
    <scope>CATALYTIC ACTIVITY</scope>
    <scope>DISRUPTION PHENOTYPE</scope>
    <source>
        <strain>ATCC 19069</strain>
    </source>
</reference>
<evidence type="ECO:0000255" key="1">
    <source>
        <dbReference type="PROSITE-ProRule" id="PRU00628"/>
    </source>
</evidence>
<evidence type="ECO:0000269" key="2">
    <source>
    </source>
</evidence>
<evidence type="ECO:0000303" key="3">
    <source>
    </source>
</evidence>
<evidence type="ECO:0000305" key="4"/>
<evidence type="ECO:0000305" key="5">
    <source>
    </source>
</evidence>
<evidence type="ECO:0000312" key="6">
    <source>
        <dbReference type="EMBL" id="AAU92909.1"/>
    </source>
</evidence>
<protein>
    <recommendedName>
        <fullName evidence="4">4beta-methylsterol monooxygenase</fullName>
        <ecNumber evidence="2">1.14.13.246</ecNumber>
    </recommendedName>
    <alternativeName>
        <fullName evidence="3">Sterol demethylase protein A</fullName>
    </alternativeName>
</protein>
<proteinExistence type="evidence at protein level"/>
<name>SDMA_METCA</name>
<organism>
    <name type="scientific">Methylococcus capsulatus (strain ATCC 33009 / NCIMB 11132 / Bath)</name>
    <dbReference type="NCBI Taxonomy" id="243233"/>
    <lineage>
        <taxon>Bacteria</taxon>
        <taxon>Pseudomonadati</taxon>
        <taxon>Pseudomonadota</taxon>
        <taxon>Gammaproteobacteria</taxon>
        <taxon>Methylococcales</taxon>
        <taxon>Methylococcaceae</taxon>
        <taxon>Methylococcus</taxon>
    </lineage>
</organism>
<comment type="function">
    <text evidence="2">Participates in the biosynthesis of bacterial sterols (PubMed:29784781). Together with SdmB, removes one methyl group from the C-4 position of 4,4-dimethylated steroid molecules (PubMed:29784781). SdmA oxidizes the sterol 4beta-methyl group into first a hydroxyl, then an aldehyde and finally a carboxylic acid group (PubMed:29784781).</text>
</comment>
<comment type="catalytic activity">
    <reaction evidence="2">
        <text>a 3beta-hydroxy-4,4-dimethylsteroid + 3 NADH + 3 O2 + 2 H(+) = a 3beta-hydroxy-4alpha-methylsteroid-4beta-carboxylate + 3 NAD(+) + 4 H2O</text>
        <dbReference type="Rhea" id="RHEA:60048"/>
        <dbReference type="ChEBI" id="CHEBI:15377"/>
        <dbReference type="ChEBI" id="CHEBI:15378"/>
        <dbReference type="ChEBI" id="CHEBI:15379"/>
        <dbReference type="ChEBI" id="CHEBI:57540"/>
        <dbReference type="ChEBI" id="CHEBI:57945"/>
        <dbReference type="ChEBI" id="CHEBI:143563"/>
        <dbReference type="ChEBI" id="CHEBI:143569"/>
        <dbReference type="EC" id="1.14.13.246"/>
    </reaction>
</comment>
<comment type="catalytic activity">
    <reaction evidence="2">
        <text>4,4-dimethyl-5alpha-cholesta-8,24-dien-3beta-ol + 3 NADH + 3 O2 + 2 H(+) = 4beta-carboxy-4alpha-methyl-5alpha-cholesta-8,24-dien-3beta-ol + 3 NAD(+) + 4 H2O</text>
        <dbReference type="Rhea" id="RHEA:60068"/>
        <dbReference type="ChEBI" id="CHEBI:15377"/>
        <dbReference type="ChEBI" id="CHEBI:15378"/>
        <dbReference type="ChEBI" id="CHEBI:15379"/>
        <dbReference type="ChEBI" id="CHEBI:18364"/>
        <dbReference type="ChEBI" id="CHEBI:57540"/>
        <dbReference type="ChEBI" id="CHEBI:57945"/>
        <dbReference type="ChEBI" id="CHEBI:143574"/>
        <dbReference type="EC" id="1.14.13.246"/>
    </reaction>
</comment>
<comment type="catalytic activity">
    <reaction evidence="2">
        <text>a 3beta-hydroxy-4,4-dimethylsteroid + NADH + O2 + H(+) = a 3beta-hydroxy-4beta-hydroxymethyl-4alpha-methylsteroid + NAD(+) + H2O</text>
        <dbReference type="Rhea" id="RHEA:60052"/>
        <dbReference type="ChEBI" id="CHEBI:15377"/>
        <dbReference type="ChEBI" id="CHEBI:15378"/>
        <dbReference type="ChEBI" id="CHEBI:15379"/>
        <dbReference type="ChEBI" id="CHEBI:57540"/>
        <dbReference type="ChEBI" id="CHEBI:57945"/>
        <dbReference type="ChEBI" id="CHEBI:143563"/>
        <dbReference type="ChEBI" id="CHEBI:143566"/>
    </reaction>
</comment>
<comment type="catalytic activity">
    <reaction evidence="2">
        <text>a 3beta-hydroxy-4beta-hydroxymethyl-4alpha-methylsteroid + NADH + O2 + H(+) = a 3beta-hydroxy-4beta-formyl-4alpha-methylsteroid + NAD(+) + 2 H2O</text>
        <dbReference type="Rhea" id="RHEA:60056"/>
        <dbReference type="ChEBI" id="CHEBI:15377"/>
        <dbReference type="ChEBI" id="CHEBI:15378"/>
        <dbReference type="ChEBI" id="CHEBI:15379"/>
        <dbReference type="ChEBI" id="CHEBI:57540"/>
        <dbReference type="ChEBI" id="CHEBI:57945"/>
        <dbReference type="ChEBI" id="CHEBI:143566"/>
        <dbReference type="ChEBI" id="CHEBI:143568"/>
    </reaction>
</comment>
<comment type="catalytic activity">
    <reaction evidence="2">
        <text>a 3beta-hydroxy-4beta-formyl-4alpha-methylsteroid + NADH + O2 = a 3beta-hydroxy-4alpha-methylsteroid-4beta-carboxylate + NAD(+) + H2O</text>
        <dbReference type="Rhea" id="RHEA:60064"/>
        <dbReference type="ChEBI" id="CHEBI:15377"/>
        <dbReference type="ChEBI" id="CHEBI:15379"/>
        <dbReference type="ChEBI" id="CHEBI:57540"/>
        <dbReference type="ChEBI" id="CHEBI:57945"/>
        <dbReference type="ChEBI" id="CHEBI:143568"/>
        <dbReference type="ChEBI" id="CHEBI:143569"/>
    </reaction>
</comment>
<comment type="catalytic activity">
    <reaction evidence="2">
        <text>4,4-dimethyl-5alpha-cholesta-8,24-dien-3beta-ol + NADH + O2 + H(+) = 4beta-hydroxymethyl-4alpha-methylzymosterol + NAD(+) + H2O</text>
        <dbReference type="Rhea" id="RHEA:60072"/>
        <dbReference type="ChEBI" id="CHEBI:15377"/>
        <dbReference type="ChEBI" id="CHEBI:15378"/>
        <dbReference type="ChEBI" id="CHEBI:15379"/>
        <dbReference type="ChEBI" id="CHEBI:18364"/>
        <dbReference type="ChEBI" id="CHEBI:57540"/>
        <dbReference type="ChEBI" id="CHEBI:57945"/>
        <dbReference type="ChEBI" id="CHEBI:143572"/>
    </reaction>
</comment>
<comment type="catalytic activity">
    <reaction evidence="2">
        <text>4beta-hydroxymethyl-4alpha-methylzymosterol + NADH + O2 + H(+) = 4beta-formylmethyl-4alpha-methyl-5alpha-cholesta-8,24-dien-3beta-ol + NAD(+) + 2 H2O</text>
        <dbReference type="Rhea" id="RHEA:60076"/>
        <dbReference type="ChEBI" id="CHEBI:15377"/>
        <dbReference type="ChEBI" id="CHEBI:15378"/>
        <dbReference type="ChEBI" id="CHEBI:15379"/>
        <dbReference type="ChEBI" id="CHEBI:57540"/>
        <dbReference type="ChEBI" id="CHEBI:57945"/>
        <dbReference type="ChEBI" id="CHEBI:143572"/>
        <dbReference type="ChEBI" id="CHEBI:143573"/>
    </reaction>
</comment>
<comment type="catalytic activity">
    <reaction evidence="2">
        <text>4beta-formylmethyl-4alpha-methyl-5alpha-cholesta-8,24-dien-3beta-ol + NADH + O2 = 4beta-carboxy-4alpha-methyl-5alpha-cholesta-8,24-dien-3beta-ol + NAD(+) + H2O</text>
        <dbReference type="Rhea" id="RHEA:60080"/>
        <dbReference type="ChEBI" id="CHEBI:15377"/>
        <dbReference type="ChEBI" id="CHEBI:15379"/>
        <dbReference type="ChEBI" id="CHEBI:57540"/>
        <dbReference type="ChEBI" id="CHEBI:57945"/>
        <dbReference type="ChEBI" id="CHEBI:143573"/>
        <dbReference type="ChEBI" id="CHEBI:143574"/>
    </reaction>
</comment>
<comment type="cofactor">
    <cofactor evidence="1">
        <name>[2Fe-2S] cluster</name>
        <dbReference type="ChEBI" id="CHEBI:190135"/>
    </cofactor>
    <text evidence="1">Binds 1 [2Fe-2S] cluster per subunit.</text>
</comment>
<comment type="pathway">
    <text evidence="5">Steroid biosynthesis; sterol biosynthesis.</text>
</comment>
<comment type="disruption phenotype">
    <text evidence="2">Deletion of sdmA and sdmB results in complete loss of sterol C-4 demethylation.</text>
</comment>
<feature type="chain" id="PRO_0000456753" description="4beta-methylsterol monooxygenase">
    <location>
        <begin position="1"/>
        <end position="369"/>
    </location>
</feature>
<feature type="domain" description="Rieske" evidence="1">
    <location>
        <begin position="29"/>
        <end position="135"/>
    </location>
</feature>
<feature type="binding site" evidence="1">
    <location>
        <position position="70"/>
    </location>
    <ligand>
        <name>[2Fe-2S] cluster</name>
        <dbReference type="ChEBI" id="CHEBI:190135"/>
    </ligand>
</feature>
<feature type="binding site" evidence="1">
    <location>
        <position position="72"/>
    </location>
    <ligand>
        <name>[2Fe-2S] cluster</name>
        <dbReference type="ChEBI" id="CHEBI:190135"/>
    </ligand>
</feature>
<feature type="binding site" evidence="1">
    <location>
        <position position="89"/>
    </location>
    <ligand>
        <name>[2Fe-2S] cluster</name>
        <dbReference type="ChEBI" id="CHEBI:190135"/>
    </ligand>
</feature>
<feature type="binding site" evidence="1">
    <location>
        <position position="92"/>
    </location>
    <ligand>
        <name>[2Fe-2S] cluster</name>
        <dbReference type="ChEBI" id="CHEBI:190135"/>
    </ligand>
</feature>
<keyword id="KW-0001">2Fe-2S</keyword>
<keyword id="KW-0408">Iron</keyword>
<keyword id="KW-0411">Iron-sulfur</keyword>
<keyword id="KW-0444">Lipid biosynthesis</keyword>
<keyword id="KW-0443">Lipid metabolism</keyword>
<keyword id="KW-0479">Metal-binding</keyword>
<keyword id="KW-0503">Monooxygenase</keyword>
<keyword id="KW-0560">Oxidoreductase</keyword>
<keyword id="KW-1185">Reference proteome</keyword>
<keyword id="KW-0752">Steroid biosynthesis</keyword>
<keyword id="KW-0753">Steroid metabolism</keyword>
<keyword id="KW-0756">Sterol biosynthesis</keyword>
<keyword id="KW-1207">Sterol metabolism</keyword>
<dbReference type="EC" id="1.14.13.246" evidence="2"/>
<dbReference type="EMBL" id="AE017282">
    <property type="protein sequence ID" value="AAU92909.1"/>
    <property type="molecule type" value="Genomic_DNA"/>
</dbReference>
<dbReference type="RefSeq" id="WP_010960317.1">
    <property type="nucleotide sequence ID" value="NC_002977.6"/>
</dbReference>
<dbReference type="SMR" id="Q60A55"/>
<dbReference type="STRING" id="243233.MCA1016"/>
<dbReference type="GeneID" id="88223310"/>
<dbReference type="KEGG" id="mca:MCA1016"/>
<dbReference type="eggNOG" id="COG4638">
    <property type="taxonomic scope" value="Bacteria"/>
</dbReference>
<dbReference type="HOGENOM" id="CLU_039484_2_0_6"/>
<dbReference type="BioCyc" id="MetaCyc:MONOMER-20665"/>
<dbReference type="UniPathway" id="UPA00766"/>
<dbReference type="Proteomes" id="UP000006821">
    <property type="component" value="Chromosome"/>
</dbReference>
<dbReference type="GO" id="GO:0051537">
    <property type="term" value="F:2 iron, 2 sulfur cluster binding"/>
    <property type="evidence" value="ECO:0007669"/>
    <property type="project" value="UniProtKB-KW"/>
</dbReference>
<dbReference type="GO" id="GO:0046872">
    <property type="term" value="F:metal ion binding"/>
    <property type="evidence" value="ECO:0007669"/>
    <property type="project" value="UniProtKB-KW"/>
</dbReference>
<dbReference type="GO" id="GO:0004497">
    <property type="term" value="F:monooxygenase activity"/>
    <property type="evidence" value="ECO:0007669"/>
    <property type="project" value="UniProtKB-KW"/>
</dbReference>
<dbReference type="GO" id="GO:0016126">
    <property type="term" value="P:sterol biosynthetic process"/>
    <property type="evidence" value="ECO:0007669"/>
    <property type="project" value="UniProtKB-UniPathway"/>
</dbReference>
<dbReference type="Gene3D" id="3.90.380.10">
    <property type="entry name" value="Naphthalene 1,2-dioxygenase Alpha Subunit, Chain A, domain 1"/>
    <property type="match status" value="1"/>
</dbReference>
<dbReference type="Gene3D" id="2.102.10.10">
    <property type="entry name" value="Rieske [2Fe-2S] iron-sulphur domain"/>
    <property type="match status" value="1"/>
</dbReference>
<dbReference type="InterPro" id="IPR050584">
    <property type="entry name" value="Cholesterol_7-desaturase"/>
</dbReference>
<dbReference type="InterPro" id="IPR017941">
    <property type="entry name" value="Rieske_2Fe-2S"/>
</dbReference>
<dbReference type="InterPro" id="IPR036922">
    <property type="entry name" value="Rieske_2Fe-2S_sf"/>
</dbReference>
<dbReference type="InterPro" id="IPR044043">
    <property type="entry name" value="VanA_C_cat"/>
</dbReference>
<dbReference type="PANTHER" id="PTHR21266:SF57">
    <property type="entry name" value="3-CHLOROBENZOATE-3,4-DIOXYGENASE"/>
    <property type="match status" value="1"/>
</dbReference>
<dbReference type="PANTHER" id="PTHR21266">
    <property type="entry name" value="IRON-SULFUR DOMAIN CONTAINING PROTEIN"/>
    <property type="match status" value="1"/>
</dbReference>
<dbReference type="Pfam" id="PF00355">
    <property type="entry name" value="Rieske"/>
    <property type="match status" value="1"/>
</dbReference>
<dbReference type="Pfam" id="PF19112">
    <property type="entry name" value="VanA_C"/>
    <property type="match status" value="1"/>
</dbReference>
<dbReference type="SUPFAM" id="SSF55961">
    <property type="entry name" value="Bet v1-like"/>
    <property type="match status" value="1"/>
</dbReference>
<dbReference type="SUPFAM" id="SSF50022">
    <property type="entry name" value="ISP domain"/>
    <property type="match status" value="1"/>
</dbReference>
<dbReference type="PROSITE" id="PS51296">
    <property type="entry name" value="RIESKE"/>
    <property type="match status" value="1"/>
</dbReference>
<gene>
    <name evidence="3" type="primary">sdmA</name>
    <name evidence="6" type="ordered locus">MCA1016</name>
</gene>
<accession>Q60A55</accession>